<keyword id="KW-0416">Keratin</keyword>
<keyword id="KW-1185">Reference proteome</keyword>
<keyword id="KW-0677">Repeat</keyword>
<reference key="1">
    <citation type="journal article" date="2006" name="Nature">
        <title>DNA sequence of human chromosome 17 and analysis of rearrangement in the human lineage.</title>
        <authorList>
            <person name="Zody M.C."/>
            <person name="Garber M."/>
            <person name="Adams D.J."/>
            <person name="Sharpe T."/>
            <person name="Harrow J."/>
            <person name="Lupski J.R."/>
            <person name="Nicholson C."/>
            <person name="Searle S.M."/>
            <person name="Wilming L."/>
            <person name="Young S.K."/>
            <person name="Abouelleil A."/>
            <person name="Allen N.R."/>
            <person name="Bi W."/>
            <person name="Bloom T."/>
            <person name="Borowsky M.L."/>
            <person name="Bugalter B.E."/>
            <person name="Butler J."/>
            <person name="Chang J.L."/>
            <person name="Chen C.-K."/>
            <person name="Cook A."/>
            <person name="Corum B."/>
            <person name="Cuomo C.A."/>
            <person name="de Jong P.J."/>
            <person name="DeCaprio D."/>
            <person name="Dewar K."/>
            <person name="FitzGerald M."/>
            <person name="Gilbert J."/>
            <person name="Gibson R."/>
            <person name="Gnerre S."/>
            <person name="Goldstein S."/>
            <person name="Grafham D.V."/>
            <person name="Grocock R."/>
            <person name="Hafez N."/>
            <person name="Hagopian D.S."/>
            <person name="Hart E."/>
            <person name="Norman C.H."/>
            <person name="Humphray S."/>
            <person name="Jaffe D.B."/>
            <person name="Jones M."/>
            <person name="Kamal M."/>
            <person name="Khodiyar V.K."/>
            <person name="LaButti K."/>
            <person name="Laird G."/>
            <person name="Lehoczky J."/>
            <person name="Liu X."/>
            <person name="Lokyitsang T."/>
            <person name="Loveland J."/>
            <person name="Lui A."/>
            <person name="Macdonald P."/>
            <person name="Major J.E."/>
            <person name="Matthews L."/>
            <person name="Mauceli E."/>
            <person name="McCarroll S.A."/>
            <person name="Mihalev A.H."/>
            <person name="Mudge J."/>
            <person name="Nguyen C."/>
            <person name="Nicol R."/>
            <person name="O'Leary S.B."/>
            <person name="Osoegawa K."/>
            <person name="Schwartz D.C."/>
            <person name="Shaw-Smith C."/>
            <person name="Stankiewicz P."/>
            <person name="Steward C."/>
            <person name="Swarbreck D."/>
            <person name="Venkataraman V."/>
            <person name="Whittaker C.A."/>
            <person name="Yang X."/>
            <person name="Zimmer A.R."/>
            <person name="Bradley A."/>
            <person name="Hubbard T."/>
            <person name="Birren B.W."/>
            <person name="Rogers J."/>
            <person name="Lander E.S."/>
            <person name="Nusbaum C."/>
        </authorList>
    </citation>
    <scope>NUCLEOTIDE SEQUENCE [LARGE SCALE GENOMIC DNA]</scope>
</reference>
<reference key="2">
    <citation type="journal article" date="2001" name="J. Biol. Chem.">
        <title>Characterization of a cluster of human high/ultrahigh sulfur keratin-associated protein genes embedded in the type I keratin gene domain on chromosome 17q12-21.</title>
        <authorList>
            <person name="Rogers M.A."/>
            <person name="Langbein L."/>
            <person name="Winter H."/>
            <person name="Ehmann C."/>
            <person name="Praetzel S."/>
            <person name="Korn B."/>
            <person name="Schweizer J."/>
        </authorList>
    </citation>
    <scope>IDENTIFICATION</scope>
    <scope>TISSUE SPECIFICITY</scope>
</reference>
<gene>
    <name type="primary">KRTAP1-4</name>
    <name type="synonym">KAP1.4</name>
    <name type="synonym">KRTAP1.4</name>
</gene>
<sequence length="121" mass="12324">MASCSTSGTCGSSCCQPSCCETSCCQPSCCQTSSCGTGCGIGGGIGYGQEGSGGSVSTRIRWCHPDCHVEGTCLPPCYLVSCTPPSCCQLHHAEASCCRPSYCGQSCCRPACCCHCCEPTC</sequence>
<evidence type="ECO:0000269" key="1">
    <source>
    </source>
</evidence>
<evidence type="ECO:0000305" key="2"/>
<comment type="function">
    <text>In the hair cortex, hair keratin intermediate filaments are embedded in an interfilamentous matrix, consisting of hair keratin-associated proteins (KRTAP), which are essential for the formation of a rigid and resistant hair shaft through their extensive disulfide bond cross-linking with abundant cysteine residues of hair keratins. The matrix proteins include the high-sulfur and high-glycine-tyrosine keratins.</text>
</comment>
<comment type="subunit">
    <text>Interacts with hair keratins.</text>
</comment>
<comment type="tissue specificity">
    <text evidence="1">Expressed in the middle/upper portions of the hair cortex, in the region termed the keratogenous zone.</text>
</comment>
<comment type="similarity">
    <text evidence="2">Belongs to the KRTAP type 1 family.</text>
</comment>
<name>KRA14_HUMAN</name>
<accession>P0C5Y4</accession>
<accession>A6NJ92</accession>
<proteinExistence type="evidence at transcript level"/>
<dbReference type="EMBL" id="AC007455">
    <property type="status" value="NOT_ANNOTATED_CDS"/>
    <property type="molecule type" value="Genomic_DNA"/>
</dbReference>
<dbReference type="CCDS" id="CCDS58548.1"/>
<dbReference type="RefSeq" id="NP_001244234.1">
    <property type="nucleotide sequence ID" value="NM_001257305.2"/>
</dbReference>
<dbReference type="FunCoup" id="P0C5Y4">
    <property type="interactions" value="13"/>
</dbReference>
<dbReference type="STRING" id="9606.ENSP00000366976"/>
<dbReference type="BioMuta" id="KRTAP1-4"/>
<dbReference type="DMDM" id="162416160"/>
<dbReference type="MassIVE" id="P0C5Y4"/>
<dbReference type="PaxDb" id="9606-ENSP00000366976"/>
<dbReference type="PeptideAtlas" id="P0C5Y4"/>
<dbReference type="Antibodypedia" id="81650">
    <property type="antibodies" value="1 antibodies from 1 providers"/>
</dbReference>
<dbReference type="DNASU" id="728255"/>
<dbReference type="Ensembl" id="ENST00000377747.5">
    <property type="protein sequence ID" value="ENSP00000366976.4"/>
    <property type="gene ID" value="ENSG00000204887.5"/>
</dbReference>
<dbReference type="Ensembl" id="ENST00000576814.2">
    <property type="protein sequence ID" value="ENSP00000458243.2"/>
    <property type="gene ID" value="ENSG00000263242.2"/>
</dbReference>
<dbReference type="GeneID" id="728255"/>
<dbReference type="KEGG" id="hsa:728255"/>
<dbReference type="MANE-Select" id="ENST00000377747.5">
    <property type="protein sequence ID" value="ENSP00000366976.4"/>
    <property type="RefSeq nucleotide sequence ID" value="NM_001257305.2"/>
    <property type="RefSeq protein sequence ID" value="NP_001244234.1"/>
</dbReference>
<dbReference type="UCSC" id="uc031raf.2">
    <property type="organism name" value="human"/>
</dbReference>
<dbReference type="AGR" id="HGNC:18904"/>
<dbReference type="CTD" id="728255"/>
<dbReference type="GeneCards" id="KRTAP1-4"/>
<dbReference type="HGNC" id="HGNC:18904">
    <property type="gene designation" value="KRTAP1-4"/>
</dbReference>
<dbReference type="HPA" id="ENSG00000204887">
    <property type="expression patterns" value="Tissue enriched (skin)"/>
</dbReference>
<dbReference type="MIM" id="608821">
    <property type="type" value="gene"/>
</dbReference>
<dbReference type="neXtProt" id="NX_P0C5Y4"/>
<dbReference type="VEuPathDB" id="HostDB:ENSG00000204887"/>
<dbReference type="eggNOG" id="KOG4726">
    <property type="taxonomic scope" value="Eukaryota"/>
</dbReference>
<dbReference type="GeneTree" id="ENSGT00940000160443"/>
<dbReference type="HOGENOM" id="CLU_109417_0_0_1"/>
<dbReference type="InParanoid" id="P0C5Y4"/>
<dbReference type="OMA" id="ECCELQS"/>
<dbReference type="OrthoDB" id="9838409at2759"/>
<dbReference type="PAN-GO" id="P0C5Y4">
    <property type="GO annotations" value="0 GO annotations based on evolutionary models"/>
</dbReference>
<dbReference type="PhylomeDB" id="P0C5Y4"/>
<dbReference type="PathwayCommons" id="P0C5Y4"/>
<dbReference type="Reactome" id="R-HSA-6805567">
    <property type="pathway name" value="Keratinization"/>
</dbReference>
<dbReference type="BioGRID-ORCS" id="728255">
    <property type="hits" value="13 hits in 1137 CRISPR screens"/>
</dbReference>
<dbReference type="GenomeRNAi" id="728255"/>
<dbReference type="Pharos" id="P0C5Y4">
    <property type="development level" value="Tdark"/>
</dbReference>
<dbReference type="PRO" id="PR:P0C5Y4"/>
<dbReference type="Proteomes" id="UP000005640">
    <property type="component" value="Chromosome 17"/>
</dbReference>
<dbReference type="RNAct" id="P0C5Y4">
    <property type="molecule type" value="protein"/>
</dbReference>
<dbReference type="Bgee" id="ENSG00000204887">
    <property type="expression patterns" value="Expressed in skin of abdomen and 17 other cell types or tissues"/>
</dbReference>
<dbReference type="GO" id="GO:0005829">
    <property type="term" value="C:cytosol"/>
    <property type="evidence" value="ECO:0000304"/>
    <property type="project" value="Reactome"/>
</dbReference>
<dbReference type="GO" id="GO:0045095">
    <property type="term" value="C:keratin filament"/>
    <property type="evidence" value="ECO:0007669"/>
    <property type="project" value="InterPro"/>
</dbReference>
<dbReference type="InterPro" id="IPR002494">
    <property type="entry name" value="KAP"/>
</dbReference>
<dbReference type="Pfam" id="PF01500">
    <property type="entry name" value="Keratin_B2"/>
    <property type="match status" value="1"/>
</dbReference>
<protein>
    <recommendedName>
        <fullName>Keratin-associated protein 1-4</fullName>
    </recommendedName>
    <alternativeName>
        <fullName>High sulfur keratin-associated protein 1.4</fullName>
    </alternativeName>
    <alternativeName>
        <fullName>Keratin-associated protein 1.4</fullName>
    </alternativeName>
</protein>
<feature type="chain" id="PRO_0000312505" description="Keratin-associated protein 1-4">
    <location>
        <begin position="1"/>
        <end position="121"/>
    </location>
</feature>
<organism>
    <name type="scientific">Homo sapiens</name>
    <name type="common">Human</name>
    <dbReference type="NCBI Taxonomy" id="9606"/>
    <lineage>
        <taxon>Eukaryota</taxon>
        <taxon>Metazoa</taxon>
        <taxon>Chordata</taxon>
        <taxon>Craniata</taxon>
        <taxon>Vertebrata</taxon>
        <taxon>Euteleostomi</taxon>
        <taxon>Mammalia</taxon>
        <taxon>Eutheria</taxon>
        <taxon>Euarchontoglires</taxon>
        <taxon>Primates</taxon>
        <taxon>Haplorrhini</taxon>
        <taxon>Catarrhini</taxon>
        <taxon>Hominidae</taxon>
        <taxon>Homo</taxon>
    </lineage>
</organism>